<dbReference type="EMBL" id="CP001177">
    <property type="protein sequence ID" value="ACJ81609.1"/>
    <property type="molecule type" value="Genomic_DNA"/>
</dbReference>
<dbReference type="SMR" id="B7I0K9"/>
<dbReference type="KEGG" id="bcr:BCAH187_A1456"/>
<dbReference type="HOGENOM" id="CLU_023081_1_0_9"/>
<dbReference type="Proteomes" id="UP000002214">
    <property type="component" value="Chromosome"/>
</dbReference>
<dbReference type="GO" id="GO:0005829">
    <property type="term" value="C:cytosol"/>
    <property type="evidence" value="ECO:0007669"/>
    <property type="project" value="TreeGrafter"/>
</dbReference>
<dbReference type="GO" id="GO:0016491">
    <property type="term" value="F:oxidoreductase activity"/>
    <property type="evidence" value="ECO:0007669"/>
    <property type="project" value="UniProtKB-ARBA"/>
</dbReference>
<dbReference type="GO" id="GO:0006089">
    <property type="term" value="P:lactate metabolic process"/>
    <property type="evidence" value="ECO:0007669"/>
    <property type="project" value="UniProtKB-UniRule"/>
</dbReference>
<dbReference type="HAMAP" id="MF_02105">
    <property type="entry name" value="LutA"/>
    <property type="match status" value="1"/>
</dbReference>
<dbReference type="InterPro" id="IPR004017">
    <property type="entry name" value="Cys_rich_dom"/>
</dbReference>
<dbReference type="InterPro" id="IPR022822">
    <property type="entry name" value="LutA"/>
</dbReference>
<dbReference type="PANTHER" id="PTHR30296:SF0">
    <property type="entry name" value="LACTATE UTILIZATION PROTEIN A"/>
    <property type="match status" value="1"/>
</dbReference>
<dbReference type="PANTHER" id="PTHR30296">
    <property type="entry name" value="UNCHARACTERIZED PROTEIN YKGE"/>
    <property type="match status" value="1"/>
</dbReference>
<dbReference type="Pfam" id="PF02754">
    <property type="entry name" value="CCG"/>
    <property type="match status" value="2"/>
</dbReference>
<reference key="1">
    <citation type="submission" date="2008-10" db="EMBL/GenBank/DDBJ databases">
        <title>Genome sequence of Bacillus cereus AH187.</title>
        <authorList>
            <person name="Dodson R.J."/>
            <person name="Durkin A.S."/>
            <person name="Rosovitz M.J."/>
            <person name="Rasko D.A."/>
            <person name="Kolsto A.B."/>
            <person name="Okstad O.A."/>
            <person name="Ravel J."/>
            <person name="Sutton G."/>
        </authorList>
    </citation>
    <scope>NUCLEOTIDE SEQUENCE [LARGE SCALE GENOMIC DNA]</scope>
    <source>
        <strain>AH187</strain>
    </source>
</reference>
<comment type="function">
    <text evidence="1">Is involved in L-lactate degradation and allows cells to grow with lactate as the sole carbon source.</text>
</comment>
<comment type="similarity">
    <text evidence="1">Belongs to the LutA/YkgE family.</text>
</comment>
<accession>B7I0K9</accession>
<sequence length="239" mass="26190">MKVTLFVTCLVDMFETNVGKATVEVLERLGCEIEFPEAQVCCGQPAYNSGHVEAAKEAMKHMIETFEDAEYIVTPSGSCATMFHEYPHVFKDDPKWAKRAQKVADKTYEFTQFIVDVLKVTDVGASLPGIATIHKSCHMTRMLGVTEAPGILLSNVKGLTVRELPNVQNCCGFGGTFSVKMTPISEQMVDEKVDSAMETGADYLIGADCGCLLNIGGRIERLGKEIKVMHIAEVLNSRS</sequence>
<protein>
    <recommendedName>
        <fullName evidence="1">Lactate utilization protein A</fullName>
    </recommendedName>
</protein>
<organism>
    <name type="scientific">Bacillus cereus (strain AH187)</name>
    <dbReference type="NCBI Taxonomy" id="405534"/>
    <lineage>
        <taxon>Bacteria</taxon>
        <taxon>Bacillati</taxon>
        <taxon>Bacillota</taxon>
        <taxon>Bacilli</taxon>
        <taxon>Bacillales</taxon>
        <taxon>Bacillaceae</taxon>
        <taxon>Bacillus</taxon>
        <taxon>Bacillus cereus group</taxon>
    </lineage>
</organism>
<feature type="chain" id="PRO_0000384032" description="Lactate utilization protein A">
    <location>
        <begin position="1"/>
        <end position="239"/>
    </location>
</feature>
<name>LUTA_BACC7</name>
<evidence type="ECO:0000255" key="1">
    <source>
        <dbReference type="HAMAP-Rule" id="MF_02105"/>
    </source>
</evidence>
<gene>
    <name evidence="1" type="primary">lutA</name>
    <name type="ordered locus">BCAH187_A1456</name>
</gene>
<proteinExistence type="inferred from homology"/>